<gene>
    <name type="primary">prsA4</name>
    <name type="ordered locus">BC_2862</name>
</gene>
<accession>Q81CB1</accession>
<feature type="signal peptide" evidence="2">
    <location>
        <begin position="1"/>
        <end position="21"/>
    </location>
</feature>
<feature type="chain" id="PRO_0000029297" description="Foldase protein PrsA 4">
    <location>
        <begin position="22"/>
        <end position="280"/>
    </location>
</feature>
<feature type="domain" description="PpiC">
    <location>
        <begin position="132"/>
        <end position="222"/>
    </location>
</feature>
<feature type="lipid moiety-binding region" description="N-palmitoyl cysteine" evidence="2">
    <location>
        <position position="22"/>
    </location>
</feature>
<feature type="lipid moiety-binding region" description="S-diacylglycerol cysteine" evidence="2">
    <location>
        <position position="22"/>
    </location>
</feature>
<feature type="strand" evidence="4">
    <location>
        <begin position="26"/>
        <end position="29"/>
    </location>
</feature>
<feature type="helix" evidence="4">
    <location>
        <begin position="38"/>
        <end position="66"/>
    </location>
</feature>
<feature type="helix" evidence="4">
    <location>
        <begin position="71"/>
        <end position="85"/>
    </location>
</feature>
<feature type="helix" evidence="4">
    <location>
        <begin position="86"/>
        <end position="88"/>
    </location>
</feature>
<feature type="helix" evidence="4">
    <location>
        <begin position="89"/>
        <end position="92"/>
    </location>
</feature>
<feature type="helix" evidence="4">
    <location>
        <begin position="93"/>
        <end position="96"/>
    </location>
</feature>
<feature type="helix" evidence="4">
    <location>
        <begin position="101"/>
        <end position="119"/>
    </location>
</feature>
<feature type="helix" evidence="4">
    <location>
        <begin position="124"/>
        <end position="128"/>
    </location>
</feature>
<feature type="strand" evidence="4">
    <location>
        <begin position="135"/>
        <end position="144"/>
    </location>
</feature>
<feature type="helix" evidence="4">
    <location>
        <begin position="145"/>
        <end position="156"/>
    </location>
</feature>
<feature type="helix" evidence="4">
    <location>
        <begin position="161"/>
        <end position="168"/>
    </location>
</feature>
<feature type="turn" evidence="4">
    <location>
        <begin position="172"/>
        <end position="174"/>
    </location>
</feature>
<feature type="helix" evidence="4">
    <location>
        <begin position="175"/>
        <end position="177"/>
    </location>
</feature>
<feature type="helix" evidence="4">
    <location>
        <begin position="191"/>
        <end position="198"/>
    </location>
</feature>
<feature type="strand" evidence="4">
    <location>
        <begin position="209"/>
        <end position="211"/>
    </location>
</feature>
<feature type="strand" evidence="4">
    <location>
        <begin position="214"/>
        <end position="223"/>
    </location>
</feature>
<feature type="helix" evidence="4">
    <location>
        <begin position="229"/>
        <end position="246"/>
    </location>
</feature>
<feature type="helix" evidence="4">
    <location>
        <begin position="248"/>
        <end position="260"/>
    </location>
</feature>
<feature type="helix" evidence="4">
    <location>
        <begin position="269"/>
        <end position="274"/>
    </location>
</feature>
<feature type="helix" evidence="4">
    <location>
        <begin position="276"/>
        <end position="278"/>
    </location>
</feature>
<sequence>MKRKKLVIGSILMGMTLSLSACGSSDNIVTTKSGSISESDFNKKLKENYGKQNLSEMVVEKVLHDKYKVTDEEVTKQLEELKDKMGDNFNTYMESNGVKNEDQLKEKLKLTFAFEKAIKATVTEKDIKDHYKPKLQVSHILVKDEKTAKEIKEKLNSGEDFAALAKQYSEDPGSKEKGGELSEFGPGMMVKEFEDAAYKLEVGQLSEPVKSSFGYHIIKLTDKKELKPYEEEKENIRKELEQQRIQDPQFHQQVTRDLLKNADIKVSDKDLKDTFKELEK</sequence>
<evidence type="ECO:0000250" key="1"/>
<evidence type="ECO:0000255" key="2"/>
<evidence type="ECO:0000305" key="3"/>
<evidence type="ECO:0007829" key="4">
    <source>
        <dbReference type="PDB" id="6VJ6"/>
    </source>
</evidence>
<dbReference type="EC" id="5.2.1.8"/>
<dbReference type="EMBL" id="AE016877">
    <property type="protein sequence ID" value="AAP09812.1"/>
    <property type="molecule type" value="Genomic_DNA"/>
</dbReference>
<dbReference type="RefSeq" id="NP_832611.1">
    <property type="nucleotide sequence ID" value="NC_004722.1"/>
</dbReference>
<dbReference type="RefSeq" id="WP_000823432.1">
    <property type="nucleotide sequence ID" value="NC_004722.1"/>
</dbReference>
<dbReference type="PDB" id="6VJ6">
    <property type="method" value="X-ray"/>
    <property type="resolution" value="2.55 A"/>
    <property type="chains" value="A/B=26-280"/>
</dbReference>
<dbReference type="PDBsum" id="6VJ6"/>
<dbReference type="SMR" id="Q81CB1"/>
<dbReference type="STRING" id="226900.BC_2862"/>
<dbReference type="KEGG" id="bce:BC2862"/>
<dbReference type="PATRIC" id="fig|226900.8.peg.2924"/>
<dbReference type="HOGENOM" id="CLU_034646_6_1_9"/>
<dbReference type="OrthoDB" id="14196at2"/>
<dbReference type="Proteomes" id="UP000001417">
    <property type="component" value="Chromosome"/>
</dbReference>
<dbReference type="GO" id="GO:0005886">
    <property type="term" value="C:plasma membrane"/>
    <property type="evidence" value="ECO:0007669"/>
    <property type="project" value="UniProtKB-SubCell"/>
</dbReference>
<dbReference type="GO" id="GO:0003755">
    <property type="term" value="F:peptidyl-prolyl cis-trans isomerase activity"/>
    <property type="evidence" value="ECO:0007669"/>
    <property type="project" value="UniProtKB-UniRule"/>
</dbReference>
<dbReference type="GO" id="GO:0006457">
    <property type="term" value="P:protein folding"/>
    <property type="evidence" value="ECO:0007669"/>
    <property type="project" value="UniProtKB-UniRule"/>
</dbReference>
<dbReference type="FunFam" id="3.10.50.40:FF:000033">
    <property type="entry name" value="Foldase protein PrsA"/>
    <property type="match status" value="1"/>
</dbReference>
<dbReference type="Gene3D" id="3.10.50.40">
    <property type="match status" value="1"/>
</dbReference>
<dbReference type="HAMAP" id="MF_01145">
    <property type="entry name" value="Foldase_PrsA"/>
    <property type="match status" value="1"/>
</dbReference>
<dbReference type="InterPro" id="IPR023059">
    <property type="entry name" value="Foldase_PrsA"/>
</dbReference>
<dbReference type="InterPro" id="IPR046357">
    <property type="entry name" value="PPIase_dom_sf"/>
</dbReference>
<dbReference type="InterPro" id="IPR000297">
    <property type="entry name" value="PPIase_PpiC"/>
</dbReference>
<dbReference type="InterPro" id="IPR023058">
    <property type="entry name" value="PPIase_PpiC_CS"/>
</dbReference>
<dbReference type="InterPro" id="IPR050245">
    <property type="entry name" value="PrsA_foldase"/>
</dbReference>
<dbReference type="InterPro" id="IPR027304">
    <property type="entry name" value="Trigger_fact/SurA_dom_sf"/>
</dbReference>
<dbReference type="NCBIfam" id="NF002824">
    <property type="entry name" value="PRK02998.1"/>
    <property type="match status" value="1"/>
</dbReference>
<dbReference type="PANTHER" id="PTHR47245:SF1">
    <property type="entry name" value="FOLDASE PROTEIN PRSA"/>
    <property type="match status" value="1"/>
</dbReference>
<dbReference type="PANTHER" id="PTHR47245">
    <property type="entry name" value="PEPTIDYLPROLYL ISOMERASE"/>
    <property type="match status" value="1"/>
</dbReference>
<dbReference type="Pfam" id="PF13616">
    <property type="entry name" value="Rotamase_3"/>
    <property type="match status" value="1"/>
</dbReference>
<dbReference type="SUPFAM" id="SSF54534">
    <property type="entry name" value="FKBP-like"/>
    <property type="match status" value="1"/>
</dbReference>
<dbReference type="SUPFAM" id="SSF109998">
    <property type="entry name" value="Triger factor/SurA peptide-binding domain-like"/>
    <property type="match status" value="1"/>
</dbReference>
<dbReference type="PROSITE" id="PS01096">
    <property type="entry name" value="PPIC_PPIASE_1"/>
    <property type="match status" value="1"/>
</dbReference>
<dbReference type="PROSITE" id="PS50198">
    <property type="entry name" value="PPIC_PPIASE_2"/>
    <property type="match status" value="1"/>
</dbReference>
<dbReference type="PROSITE" id="PS51257">
    <property type="entry name" value="PROKAR_LIPOPROTEIN"/>
    <property type="match status" value="1"/>
</dbReference>
<keyword id="KW-0002">3D-structure</keyword>
<keyword id="KW-1003">Cell membrane</keyword>
<keyword id="KW-0413">Isomerase</keyword>
<keyword id="KW-0449">Lipoprotein</keyword>
<keyword id="KW-0472">Membrane</keyword>
<keyword id="KW-0564">Palmitate</keyword>
<keyword id="KW-1185">Reference proteome</keyword>
<keyword id="KW-0697">Rotamase</keyword>
<keyword id="KW-0732">Signal</keyword>
<name>PRSA4_BACCR</name>
<reference key="1">
    <citation type="journal article" date="2003" name="Nature">
        <title>Genome sequence of Bacillus cereus and comparative analysis with Bacillus anthracis.</title>
        <authorList>
            <person name="Ivanova N."/>
            <person name="Sorokin A."/>
            <person name="Anderson I."/>
            <person name="Galleron N."/>
            <person name="Candelon B."/>
            <person name="Kapatral V."/>
            <person name="Bhattacharyya A."/>
            <person name="Reznik G."/>
            <person name="Mikhailova N."/>
            <person name="Lapidus A."/>
            <person name="Chu L."/>
            <person name="Mazur M."/>
            <person name="Goltsman E."/>
            <person name="Larsen N."/>
            <person name="D'Souza M."/>
            <person name="Walunas T."/>
            <person name="Grechkin Y."/>
            <person name="Pusch G."/>
            <person name="Haselkorn R."/>
            <person name="Fonstein M."/>
            <person name="Ehrlich S.D."/>
            <person name="Overbeek R."/>
            <person name="Kyrpides N.C."/>
        </authorList>
    </citation>
    <scope>NUCLEOTIDE SEQUENCE [LARGE SCALE GENOMIC DNA]</scope>
    <source>
        <strain>ATCC 14579 / DSM 31 / CCUG 7414 / JCM 2152 / NBRC 15305 / NCIMB 9373 / NCTC 2599 / NRRL B-3711</strain>
    </source>
</reference>
<organism>
    <name type="scientific">Bacillus cereus (strain ATCC 14579 / DSM 31 / CCUG 7414 / JCM 2152 / NBRC 15305 / NCIMB 9373 / NCTC 2599 / NRRL B-3711)</name>
    <dbReference type="NCBI Taxonomy" id="226900"/>
    <lineage>
        <taxon>Bacteria</taxon>
        <taxon>Bacillati</taxon>
        <taxon>Bacillota</taxon>
        <taxon>Bacilli</taxon>
        <taxon>Bacillales</taxon>
        <taxon>Bacillaceae</taxon>
        <taxon>Bacillus</taxon>
        <taxon>Bacillus cereus group</taxon>
    </lineage>
</organism>
<protein>
    <recommendedName>
        <fullName>Foldase protein PrsA 4</fullName>
        <ecNumber>5.2.1.8</ecNumber>
    </recommendedName>
</protein>
<proteinExistence type="evidence at protein level"/>
<comment type="function">
    <text evidence="1">Plays a major role in protein secretion by helping the post-translocational extracellular folding of several secreted proteins.</text>
</comment>
<comment type="catalytic activity">
    <reaction>
        <text>[protein]-peptidylproline (omega=180) = [protein]-peptidylproline (omega=0)</text>
        <dbReference type="Rhea" id="RHEA:16237"/>
        <dbReference type="Rhea" id="RHEA-COMP:10747"/>
        <dbReference type="Rhea" id="RHEA-COMP:10748"/>
        <dbReference type="ChEBI" id="CHEBI:83833"/>
        <dbReference type="ChEBI" id="CHEBI:83834"/>
        <dbReference type="EC" id="5.2.1.8"/>
    </reaction>
</comment>
<comment type="subcellular location">
    <subcellularLocation>
        <location evidence="3">Cell membrane</location>
        <topology evidence="3">Lipid-anchor</topology>
    </subcellularLocation>
</comment>
<comment type="similarity">
    <text evidence="3">Belongs to the PrsA family.</text>
</comment>